<reference key="1">
    <citation type="journal article" date="1991" name="Mol. Gen. Genet.">
        <title>Two allelic genes responsible for vegetative incompatibility in the fungus Podospora anserina are not essential for cell viability.</title>
        <authorList>
            <person name="Turcq B."/>
            <person name="Deleu C."/>
            <person name="Denayrolles M."/>
            <person name="Begueret J."/>
        </authorList>
    </citation>
    <scope>NUCLEOTIDE SEQUENCE [GENOMIC DNA]</scope>
    <scope>FUNCTION</scope>
    <source>
        <strain>S / ATCC MYA-4624 / DSM 980 / FGSC 10383</strain>
    </source>
</reference>
<reference key="2">
    <citation type="journal article" date="1993" name="Genetics">
        <title>A single amino acid difference is sufficient to elicit vegetative incompatibility in the fungus Podospora anserina.</title>
        <authorList>
            <person name="Deleu C."/>
            <person name="Clave C."/>
            <person name="Begueret J."/>
        </authorList>
    </citation>
    <scope>NUCLEOTIDE SEQUENCE [GENOMIC DNA]</scope>
    <scope>FUNCTION</scope>
    <scope>MUTAGENESIS OF HIS-33</scope>
    <source>
        <strain>D</strain>
        <strain>S / ATCC MYA-4624 / DSM 980 / FGSC 10383</strain>
        <strain>U</strain>
        <strain>X</strain>
    </source>
</reference>
<reference key="3">
    <citation type="journal article" date="2008" name="Genome Biol.">
        <title>The genome sequence of the model ascomycete fungus Podospora anserina.</title>
        <authorList>
            <person name="Espagne E."/>
            <person name="Lespinet O."/>
            <person name="Malagnac F."/>
            <person name="Da Silva C."/>
            <person name="Jaillon O."/>
            <person name="Porcel B.M."/>
            <person name="Couloux A."/>
            <person name="Aury J.-M."/>
            <person name="Segurens B."/>
            <person name="Poulain J."/>
            <person name="Anthouard V."/>
            <person name="Grossetete S."/>
            <person name="Khalili H."/>
            <person name="Coppin E."/>
            <person name="Dequard-Chablat M."/>
            <person name="Picard M."/>
            <person name="Contamine V."/>
            <person name="Arnaise S."/>
            <person name="Bourdais A."/>
            <person name="Berteaux-Lecellier V."/>
            <person name="Gautheret D."/>
            <person name="de Vries R.P."/>
            <person name="Battaglia E."/>
            <person name="Coutinho P.M."/>
            <person name="Danchin E.G.J."/>
            <person name="Henrissat B."/>
            <person name="El Khoury R."/>
            <person name="Sainsard-Chanet A."/>
            <person name="Boivin A."/>
            <person name="Pinan-Lucarre B."/>
            <person name="Sellem C.H."/>
            <person name="Debuchy R."/>
            <person name="Wincker P."/>
            <person name="Weissenbach J."/>
            <person name="Silar P."/>
        </authorList>
    </citation>
    <scope>NUCLEOTIDE SEQUENCE [LARGE SCALE GENOMIC DNA]</scope>
    <source>
        <strain>S / ATCC MYA-4624 / DSM 980 / FGSC 10383</strain>
    </source>
</reference>
<reference key="4">
    <citation type="journal article" date="2014" name="Genetics">
        <title>Maintaining two mating types: Structure of the mating type locus and its role in heterokaryosis in Podospora anserina.</title>
        <authorList>
            <person name="Grognet P."/>
            <person name="Bidard F."/>
            <person name="Kuchly C."/>
            <person name="Tong L.C.H."/>
            <person name="Coppin E."/>
            <person name="Benkhali J.A."/>
            <person name="Couloux A."/>
            <person name="Wincker P."/>
            <person name="Debuchy R."/>
            <person name="Silar P."/>
        </authorList>
    </citation>
    <scope>GENOME REANNOTATION</scope>
    <source>
        <strain>S / ATCC MYA-4624 / DSM 980 / FGSC 10383</strain>
    </source>
</reference>
<reference key="5">
    <citation type="journal article" date="1997" name="Proc. Natl. Acad. Sci. U.S.A.">
        <title>The protein product of the het-s heterokaryon incompatibility gene of the fungus Podospora anserina behaves as a prion analog.</title>
        <authorList>
            <person name="Coustou V."/>
            <person name="Deleu C."/>
            <person name="Saupe S."/>
            <person name="Begueret J."/>
        </authorList>
    </citation>
    <scope>PRION IDENTIFICATION</scope>
    <scope>FUNCTION</scope>
    <scope>INTERACTION WITH HET-S</scope>
</reference>
<reference key="6">
    <citation type="journal article" date="2004" name="J. Cell Sci.">
        <title>The sequences appended to the amyloid core region of the HET-s prion protein determine higher-order aggregate organization in vivo.</title>
        <authorList>
            <person name="Balguerie A."/>
            <person name="Dos Reis S."/>
            <person name="Coulary-Salin B."/>
            <person name="Chaignepain S."/>
            <person name="Sabourin M."/>
            <person name="Schmitter J.M."/>
            <person name="Saupe S.J."/>
        </authorList>
    </citation>
    <scope>FUNCTION</scope>
    <scope>DOMAIN</scope>
</reference>
<reference key="7">
    <citation type="journal article" date="2010" name="Mol. Cell">
        <title>The mechanism of prion inhibition by HET-S.</title>
        <authorList>
            <person name="Greenwald J."/>
            <person name="Buhtz C."/>
            <person name="Ritter C."/>
            <person name="Kwiatkowski W."/>
            <person name="Choe S."/>
            <person name="Maddelein M.L."/>
            <person name="Ness F."/>
            <person name="Cescau S."/>
            <person name="Soragni A."/>
            <person name="Leitz D."/>
            <person name="Saupe S.J."/>
            <person name="Riek R."/>
        </authorList>
    </citation>
    <scope>X-RAY CRYSTALLOGRAPHY (2.30 ANGSTROMS) OF 1-227</scope>
    <scope>DOMAIN</scope>
</reference>
<name>HETS_PODAN</name>
<gene>
    <name type="primary">het-S</name>
    <name type="synonym">big S</name>
    <name type="ordered locus">Pa_3_620</name>
    <name type="ORF">PODANS_3_620</name>
</gene>
<protein>
    <recommendedName>
        <fullName>Heterokaryon incompatibility protein S</fullName>
    </recommendedName>
    <alternativeName>
        <fullName>Big S protein</fullName>
    </alternativeName>
    <alternativeName>
        <fullName>Vegetative incompatibility protein S</fullName>
    </alternativeName>
</protein>
<feature type="chain" id="PRO_0000417568" description="Heterokaryon incompatibility protein S">
    <location>
        <begin position="1"/>
        <end position="289"/>
    </location>
</feature>
<feature type="region of interest" description="Globular domain">
    <location>
        <begin position="1"/>
        <end position="227"/>
    </location>
</feature>
<feature type="region of interest" description="Prion domain (PrD)">
    <location>
        <begin position="218"/>
        <end position="289"/>
    </location>
</feature>
<feature type="mutagenesis site" description="Converts its specificity to [Het-s]." evidence="3">
    <original>H</original>
    <variation>P</variation>
    <location>
        <position position="33"/>
    </location>
</feature>
<feature type="helix" evidence="6">
    <location>
        <begin position="3"/>
        <end position="9"/>
    </location>
</feature>
<feature type="helix" evidence="6">
    <location>
        <begin position="14"/>
        <end position="23"/>
    </location>
</feature>
<feature type="turn" evidence="6">
    <location>
        <begin position="24"/>
        <end position="27"/>
    </location>
</feature>
<feature type="strand" evidence="6">
    <location>
        <begin position="28"/>
        <end position="31"/>
    </location>
</feature>
<feature type="helix" evidence="6">
    <location>
        <begin position="32"/>
        <end position="37"/>
    </location>
</feature>
<feature type="helix" evidence="6">
    <location>
        <begin position="38"/>
        <end position="59"/>
    </location>
</feature>
<feature type="turn" evidence="6">
    <location>
        <begin position="60"/>
        <end position="63"/>
    </location>
</feature>
<feature type="helix" evidence="6">
    <location>
        <begin position="65"/>
        <end position="68"/>
    </location>
</feature>
<feature type="helix" evidence="6">
    <location>
        <begin position="75"/>
        <end position="104"/>
    </location>
</feature>
<feature type="helix" evidence="6">
    <location>
        <begin position="107"/>
        <end position="110"/>
    </location>
</feature>
<feature type="helix" evidence="6">
    <location>
        <begin position="115"/>
        <end position="117"/>
    </location>
</feature>
<feature type="helix" evidence="6">
    <location>
        <begin position="120"/>
        <end position="136"/>
    </location>
</feature>
<feature type="strand" evidence="6">
    <location>
        <begin position="148"/>
        <end position="150"/>
    </location>
</feature>
<feature type="helix" evidence="6">
    <location>
        <begin position="153"/>
        <end position="172"/>
    </location>
</feature>
<feature type="turn" evidence="6">
    <location>
        <begin position="173"/>
        <end position="175"/>
    </location>
</feature>
<feature type="helix" evidence="6">
    <location>
        <begin position="177"/>
        <end position="187"/>
    </location>
</feature>
<feature type="turn" evidence="6">
    <location>
        <begin position="188"/>
        <end position="190"/>
    </location>
</feature>
<feature type="helix" evidence="6">
    <location>
        <begin position="194"/>
        <end position="204"/>
    </location>
</feature>
<feature type="turn" evidence="6">
    <location>
        <begin position="205"/>
        <end position="207"/>
    </location>
</feature>
<feature type="helix" evidence="6">
    <location>
        <begin position="209"/>
        <end position="218"/>
    </location>
</feature>
<feature type="helix" evidence="6">
    <location>
        <begin position="219"/>
        <end position="221"/>
    </location>
</feature>
<organism>
    <name type="scientific">Podospora anserina (strain S / ATCC MYA-4624 / DSM 980 / FGSC 10383)</name>
    <name type="common">Pleurage anserina</name>
    <dbReference type="NCBI Taxonomy" id="515849"/>
    <lineage>
        <taxon>Eukaryota</taxon>
        <taxon>Fungi</taxon>
        <taxon>Dikarya</taxon>
        <taxon>Ascomycota</taxon>
        <taxon>Pezizomycotina</taxon>
        <taxon>Sordariomycetes</taxon>
        <taxon>Sordariomycetidae</taxon>
        <taxon>Sordariales</taxon>
        <taxon>Podosporaceae</taxon>
        <taxon>Podospora</taxon>
        <taxon>Podospora anserina</taxon>
    </lineage>
</organism>
<sequence>MSEPFEIVAGALGVAGLFNNCVACFEYVQLGRHFGRDYERCQLRLDIAKVRLSRWGEAVQINDDPRFHSSAPIDKSVQLAKSIVEEILLLFESAQKTSKRYELVADQQDLVVFEDKDMKPIGRALHRRLKDLVSRRQKQTSLAKKTAWALYDGKSLEKIVDQVAGFVDELEKAFPIEAVCHKLAENEIEEVEDEASLTILKDAAGGIDAAMSDAAAQKIDAIVGRNSAKDIRTEKRARVQLGNVVTAAALHGEIRISDQTTNSVETVVGKGESKVLIGNEYGGKGFWDN</sequence>
<comment type="function">
    <text evidence="1 2 3 4">Responsible for heterokaryon incompatibility, a process that ensures that during spontaneous, vegetative cell fusion only compatible cells from the same colony survive (non-self-recognition). Interaction with the prion form [het-s] of incompatible cells triggers a lethal reaction that prevents the formation of viable heterokaryons.</text>
</comment>
<comment type="subunit">
    <text>Homodimer. Forms heterodimers with het-s.</text>
</comment>
<comment type="interaction">
    <interactant intactId="EBI-16031574">
        <id>B2ACC7</id>
    </interactant>
    <interactant intactId="EBI-16031574">
        <id>B2ACC7</id>
        <label>het-S</label>
    </interactant>
    <organismsDiffer>false</organismsDiffer>
    <experiments>2</experiments>
</comment>
<comment type="subcellular location">
    <subcellularLocation>
        <location>Cytoplasm</location>
    </subcellularLocation>
</comment>
<comment type="domain">
    <text>The globular domain exerts a prion-inhibitory effect (in cis) on its own C-terminal prion domain. The het-S globular domain, but not the het-s globular domain, is essential for programmed cell death.</text>
</comment>
<comment type="domain">
    <text>The protein contains a prion domain (PrD), but beta-structuring in this domain due to incorporation into a het-s fibril induces a change in its globular domain, generating a molecular species that is incompetent for fibril growth.</text>
</comment>
<comment type="miscellaneous">
    <text evidence="5">In P.anserina, the het-s locus exists as 2 incompatible alleles, het-s and het-S. Strains of het-s genotype (e.g. A, C, s, and V) can display 2 distinct phenoypes, the neutral (prion-free) [Het-s*], which is compatible with het-S strains (e.g. D, S, U, and X), and the reactive [Het-s] phenotype, which causes rapid cell death in het-S strains. Although the two alleles het-s and het-S differ from each other by 14 amino acids, vegetative incompatibility between s and S strains can be attributed to a single amino acid difference in the proteins encoded by the het-s locus (PubMed:8224826). A sequence for the het-s allele can be found in strain s (AC Q03689).</text>
</comment>
<evidence type="ECO:0000269" key="1">
    <source>
    </source>
</evidence>
<evidence type="ECO:0000269" key="2">
    <source>
    </source>
</evidence>
<evidence type="ECO:0000269" key="3">
    <source>
    </source>
</evidence>
<evidence type="ECO:0000269" key="4">
    <source>
    </source>
</evidence>
<evidence type="ECO:0000305" key="5">
    <source>
    </source>
</evidence>
<evidence type="ECO:0007829" key="6">
    <source>
        <dbReference type="PDB" id="2WVO"/>
    </source>
</evidence>
<dbReference type="EMBL" id="M38530">
    <property type="protein sequence ID" value="AAB88771.1"/>
    <property type="molecule type" value="Unassigned_DNA"/>
</dbReference>
<dbReference type="EMBL" id="CU633448">
    <property type="protein sequence ID" value="CAP61092.1"/>
    <property type="molecule type" value="Genomic_DNA"/>
</dbReference>
<dbReference type="EMBL" id="FO904938">
    <property type="protein sequence ID" value="CDP26545.1"/>
    <property type="molecule type" value="Genomic_DNA"/>
</dbReference>
<dbReference type="RefSeq" id="XP_001903320.1">
    <property type="nucleotide sequence ID" value="XM_001903285.1"/>
</dbReference>
<dbReference type="PDB" id="2WVO">
    <property type="method" value="X-ray"/>
    <property type="resolution" value="2.30 A"/>
    <property type="chains" value="A/B=1-227"/>
</dbReference>
<dbReference type="PDBsum" id="2WVO"/>
<dbReference type="SMR" id="B2ACC7"/>
<dbReference type="DIP" id="DIP-59996N"/>
<dbReference type="IntAct" id="B2ACC7">
    <property type="interactions" value="1"/>
</dbReference>
<dbReference type="STRING" id="515849.B2ACC7"/>
<dbReference type="GeneID" id="6187356"/>
<dbReference type="KEGG" id="pan:PODANSg332"/>
<dbReference type="VEuPathDB" id="FungiDB:PODANS_3_620"/>
<dbReference type="eggNOG" id="ENOG502RDGS">
    <property type="taxonomic scope" value="Eukaryota"/>
</dbReference>
<dbReference type="HOGENOM" id="CLU_058675_0_0_1"/>
<dbReference type="InParanoid" id="B2ACC7"/>
<dbReference type="OrthoDB" id="4577827at2759"/>
<dbReference type="EvolutionaryTrace" id="B2ACC7"/>
<dbReference type="Proteomes" id="UP000001197">
    <property type="component" value="Chromosome 3"/>
</dbReference>
<dbReference type="GO" id="GO:0005737">
    <property type="term" value="C:cytoplasm"/>
    <property type="evidence" value="ECO:0007669"/>
    <property type="project" value="UniProtKB-SubCell"/>
</dbReference>
<dbReference type="GO" id="GO:0042802">
    <property type="term" value="F:identical protein binding"/>
    <property type="evidence" value="ECO:0000353"/>
    <property type="project" value="IntAct"/>
</dbReference>
<dbReference type="GO" id="GO:0006915">
    <property type="term" value="P:apoptotic process"/>
    <property type="evidence" value="ECO:0007669"/>
    <property type="project" value="UniProtKB-KW"/>
</dbReference>
<dbReference type="FunFam" id="1.20.120.1020:FF:000002">
    <property type="entry name" value="Heterokaryon incompatibility protein s"/>
    <property type="match status" value="1"/>
</dbReference>
<dbReference type="Gene3D" id="1.20.120.1020">
    <property type="entry name" value="Prion-inhibition and propagation, HeLo domain"/>
    <property type="match status" value="1"/>
</dbReference>
<dbReference type="InterPro" id="IPR029498">
    <property type="entry name" value="HeLo_dom"/>
</dbReference>
<dbReference type="InterPro" id="IPR038305">
    <property type="entry name" value="HeLo_sf"/>
</dbReference>
<dbReference type="InterPro" id="IPR021084">
    <property type="entry name" value="Het-s_prion_dom"/>
</dbReference>
<dbReference type="PANTHER" id="PTHR37542">
    <property type="entry name" value="HELO DOMAIN-CONTAINING PROTEIN-RELATED"/>
    <property type="match status" value="1"/>
</dbReference>
<dbReference type="PANTHER" id="PTHR37542:SF3">
    <property type="entry name" value="PRION-INHIBITION AND PROPAGATION HELO DOMAIN-CONTAINING PROTEIN"/>
    <property type="match status" value="1"/>
</dbReference>
<dbReference type="Pfam" id="PF14479">
    <property type="entry name" value="HeLo"/>
    <property type="match status" value="1"/>
</dbReference>
<dbReference type="Pfam" id="PF11558">
    <property type="entry name" value="HET-s_218-289"/>
    <property type="match status" value="1"/>
</dbReference>
<keyword id="KW-0002">3D-structure</keyword>
<keyword id="KW-0053">Apoptosis</keyword>
<keyword id="KW-0963">Cytoplasm</keyword>
<keyword id="KW-1185">Reference proteome</keyword>
<accession>B2ACC7</accession>
<accession>A0A090CFF4</accession>
<accession>Q1K9D3</accession>
<proteinExistence type="evidence at protein level"/>